<evidence type="ECO:0000255" key="1">
    <source>
        <dbReference type="HAMAP-Rule" id="MF_00911"/>
    </source>
</evidence>
<evidence type="ECO:0000255" key="2">
    <source>
        <dbReference type="PROSITE-ProRule" id="PRU01115"/>
    </source>
</evidence>
<evidence type="ECO:0000256" key="3">
    <source>
        <dbReference type="SAM" id="MobiDB-lite"/>
    </source>
</evidence>
<name>FTSQ_MYXFH</name>
<comment type="function">
    <text evidence="1">Essential cell division protein.</text>
</comment>
<comment type="subcellular location">
    <subcellularLocation>
        <location evidence="1">Cell inner membrane</location>
        <topology evidence="1">Single-pass type II membrane protein</topology>
    </subcellularLocation>
    <text evidence="1">Localizes to the division septum.</text>
</comment>
<comment type="similarity">
    <text evidence="1">Belongs to the FtsQ/DivIB family. FtsQ subfamily.</text>
</comment>
<dbReference type="EMBL" id="CP002830">
    <property type="protein sequence ID" value="AEI68974.1"/>
    <property type="molecule type" value="Genomic_DNA"/>
</dbReference>
<dbReference type="SMR" id="F8CLT8"/>
<dbReference type="STRING" id="483219.LILAB_35465"/>
<dbReference type="KEGG" id="mfu:LILAB_35465"/>
<dbReference type="eggNOG" id="COG1589">
    <property type="taxonomic scope" value="Bacteria"/>
</dbReference>
<dbReference type="HOGENOM" id="CLU_047677_3_0_7"/>
<dbReference type="Proteomes" id="UP000000488">
    <property type="component" value="Chromosome"/>
</dbReference>
<dbReference type="GO" id="GO:0032153">
    <property type="term" value="C:cell division site"/>
    <property type="evidence" value="ECO:0007669"/>
    <property type="project" value="UniProtKB-UniRule"/>
</dbReference>
<dbReference type="GO" id="GO:0005886">
    <property type="term" value="C:plasma membrane"/>
    <property type="evidence" value="ECO:0007669"/>
    <property type="project" value="UniProtKB-SubCell"/>
</dbReference>
<dbReference type="GO" id="GO:0090529">
    <property type="term" value="P:cell septum assembly"/>
    <property type="evidence" value="ECO:0007669"/>
    <property type="project" value="InterPro"/>
</dbReference>
<dbReference type="GO" id="GO:0043093">
    <property type="term" value="P:FtsZ-dependent cytokinesis"/>
    <property type="evidence" value="ECO:0007669"/>
    <property type="project" value="UniProtKB-UniRule"/>
</dbReference>
<dbReference type="Gene3D" id="3.40.50.11690">
    <property type="entry name" value="Cell division protein FtsQ/DivIB"/>
    <property type="match status" value="1"/>
</dbReference>
<dbReference type="Gene3D" id="3.10.20.310">
    <property type="entry name" value="membrane protein fhac"/>
    <property type="match status" value="1"/>
</dbReference>
<dbReference type="HAMAP" id="MF_00911">
    <property type="entry name" value="FtsQ_subfam"/>
    <property type="match status" value="1"/>
</dbReference>
<dbReference type="InterPro" id="IPR005548">
    <property type="entry name" value="Cell_div_FtsQ/DivIB_C"/>
</dbReference>
<dbReference type="InterPro" id="IPR026579">
    <property type="entry name" value="FtsQ"/>
</dbReference>
<dbReference type="InterPro" id="IPR045335">
    <property type="entry name" value="FtsQ_C_sf"/>
</dbReference>
<dbReference type="InterPro" id="IPR034746">
    <property type="entry name" value="POTRA"/>
</dbReference>
<dbReference type="InterPro" id="IPR013685">
    <property type="entry name" value="POTRA_FtsQ_type"/>
</dbReference>
<dbReference type="PANTHER" id="PTHR35851">
    <property type="entry name" value="CELL DIVISION PROTEIN FTSQ"/>
    <property type="match status" value="1"/>
</dbReference>
<dbReference type="PANTHER" id="PTHR35851:SF1">
    <property type="entry name" value="CELL DIVISION PROTEIN FTSQ"/>
    <property type="match status" value="1"/>
</dbReference>
<dbReference type="Pfam" id="PF03799">
    <property type="entry name" value="FtsQ_DivIB_C"/>
    <property type="match status" value="1"/>
</dbReference>
<dbReference type="Pfam" id="PF08478">
    <property type="entry name" value="POTRA_1"/>
    <property type="match status" value="1"/>
</dbReference>
<dbReference type="PROSITE" id="PS51779">
    <property type="entry name" value="POTRA"/>
    <property type="match status" value="1"/>
</dbReference>
<gene>
    <name evidence="1" type="primary">ftsQ</name>
    <name type="ordered locus">LILAB_35465</name>
</gene>
<reference key="1">
    <citation type="journal article" date="2011" name="J. Bacteriol.">
        <title>Genome sequence of the halotolerant marine bacterium Myxococcus fulvus HW-1.</title>
        <authorList>
            <person name="Li Z.F."/>
            <person name="Li X."/>
            <person name="Liu H."/>
            <person name="Liu X."/>
            <person name="Han K."/>
            <person name="Wu Z.H."/>
            <person name="Hu W."/>
            <person name="Li F.F."/>
            <person name="Li Y.Z."/>
        </authorList>
    </citation>
    <scope>NUCLEOTIDE SEQUENCE [LARGE SCALE GENOMIC DNA]</scope>
    <source>
        <strain>ATCC BAA-855 / HW-1</strain>
    </source>
</reference>
<keyword id="KW-0131">Cell cycle</keyword>
<keyword id="KW-0132">Cell division</keyword>
<keyword id="KW-0997">Cell inner membrane</keyword>
<keyword id="KW-1003">Cell membrane</keyword>
<keyword id="KW-0472">Membrane</keyword>
<keyword id="KW-0812">Transmembrane</keyword>
<keyword id="KW-1133">Transmembrane helix</keyword>
<proteinExistence type="inferred from homology"/>
<protein>
    <recommendedName>
        <fullName evidence="1">Cell division protein FtsQ</fullName>
    </recommendedName>
</protein>
<feature type="chain" id="PRO_0000414680" description="Cell division protein FtsQ">
    <location>
        <begin position="1"/>
        <end position="284"/>
    </location>
</feature>
<feature type="topological domain" description="Cytoplasmic" evidence="1">
    <location>
        <begin position="1"/>
        <end position="34"/>
    </location>
</feature>
<feature type="transmembrane region" description="Helical" evidence="1">
    <location>
        <begin position="35"/>
        <end position="52"/>
    </location>
</feature>
<feature type="topological domain" description="Periplasmic" evidence="1">
    <location>
        <begin position="53"/>
        <end position="284"/>
    </location>
</feature>
<feature type="domain" description="POTRA" evidence="2">
    <location>
        <begin position="62"/>
        <end position="130"/>
    </location>
</feature>
<feature type="region of interest" description="Disordered" evidence="3">
    <location>
        <begin position="1"/>
        <end position="23"/>
    </location>
</feature>
<feature type="compositionally biased region" description="Basic residues" evidence="3">
    <location>
        <begin position="1"/>
        <end position="10"/>
    </location>
</feature>
<sequence length="284" mass="31057">MAFGKSKNRRRQDAAQQKEAVRGAVRSQGPRALKVLGLTLGTGLLVWGGAALREWTLTSPRFELEAVSFSGLQRASRVELLRLAALTKGQNLWTLDVDALERAMDQHPWLRTVEVTRRFPNRVSVEVTEHTPVAMAVLGELYVLDEEGEPFKRVTPGDGLDLPLVTGLDREGYVADPAAARERLRSALAVASAYARLSPDQAEQLSEVRLEAQSLALVTASGQEVRLGEGDSEVKLQRLARVRRELGARGLAAEIIHLDNRARPGWVAVKISSPASERSGASMR</sequence>
<accession>F8CLT8</accession>
<organism>
    <name type="scientific">Myxococcus fulvus (strain ATCC BAA-855 / HW-1)</name>
    <dbReference type="NCBI Taxonomy" id="483219"/>
    <lineage>
        <taxon>Bacteria</taxon>
        <taxon>Pseudomonadati</taxon>
        <taxon>Myxococcota</taxon>
        <taxon>Myxococcia</taxon>
        <taxon>Myxococcales</taxon>
        <taxon>Cystobacterineae</taxon>
        <taxon>Myxococcaceae</taxon>
        <taxon>Myxococcus</taxon>
    </lineage>
</organism>